<sequence>MTERRLTRIHSIKERLGDSLSHHPNELLALFSRFIKQGKGMLERHQLLTEYESVIPEADREKLKDGVFEDTLRASQEAIVIPPWVALAIRPRPGVWEYVRVNVNELAVEECSEYLKFKEDLVDRSSQSNFVLEMDFEPFNANVPRPSLSKSIGNGVQFLNRHLSSKLFHDKESLYPLLNFLREHNYKGTTLMLNDRLQSLSALQTALRKADRYLLSISKDTPYSEFNHSFQVLGLEKGWGDTASRVSENIHLLLDLLEAPDPSTLEKFLGTIPMVFNVVILSPHGYFAQANVLGYPDTGGQVVYILDQVRALETEMLLKIKQQGLDITPRILIVTRLLPDAVGTTCGQRLERVLGTEHTHILRVPFRTDKGILRKWISRFEVWPYLETYAEDVAHELAGEMQATPDLIIGNYSDGNLVASLLAHRLGITQCTIAHALEKTKYPNSDIYLKKFDDQYHFSCQFTADLIAMNQSDFIITSTFQEIAGSKDTVGQYESHTAFTLPGLYRVVHGIDVFDPKFNIVSPGADMSIYYPYFEQEKRLTALHAEIEELLYSSVENEEHKFVLKDRNKPIIFSMARLDRVKNMTGLVELYGKNDRLKELVNLVVVAGDHGKESKDLEEQAELKKMYKLIEEYKLQGHIRWISAQMNRVRNGELYRYIADTKGAFVQPAFYEAFGLTVVESMTCGLPTFATCHGGPAEIIVHGVSGFHIDPYHGDKASEQLVSFFEKCKEDPAHWEKISQGGLQRIYEKYTWKLYSERLMTLAGVYGFWKYVSNLDRRETRRYLEMFYALKYRNLAKSVPLAIDN</sequence>
<reference key="1">
    <citation type="submission" date="1996-03" db="EMBL/GenBank/DDBJ databases">
        <authorList>
            <person name="Balk P.A."/>
            <person name="de Boer A.D."/>
        </authorList>
    </citation>
    <scope>NUCLEOTIDE SEQUENCE [MRNA]</scope>
    <source>
        <strain>cv. Apeldoorn</strain>
    </source>
</reference>
<keyword id="KW-0328">Glycosyltransferase</keyword>
<keyword id="KW-0808">Transferase</keyword>
<evidence type="ECO:0000250" key="1">
    <source>
        <dbReference type="UniProtKB" id="P49040"/>
    </source>
</evidence>
<evidence type="ECO:0000305" key="2"/>
<accession>Q41608</accession>
<organism>
    <name type="scientific">Tulipa gesneriana</name>
    <name type="common">Garden tulip</name>
    <dbReference type="NCBI Taxonomy" id="13306"/>
    <lineage>
        <taxon>Eukaryota</taxon>
        <taxon>Viridiplantae</taxon>
        <taxon>Streptophyta</taxon>
        <taxon>Embryophyta</taxon>
        <taxon>Tracheophyta</taxon>
        <taxon>Spermatophyta</taxon>
        <taxon>Magnoliopsida</taxon>
        <taxon>Liliopsida</taxon>
        <taxon>Liliales</taxon>
        <taxon>Liliaceae</taxon>
        <taxon>Tulipa</taxon>
    </lineage>
</organism>
<name>SUS1_TULGE</name>
<protein>
    <recommendedName>
        <fullName>Sucrose synthase 1</fullName>
        <ecNumber>2.4.1.13</ecNumber>
    </recommendedName>
    <alternativeName>
        <fullName>Sucrose-UDP glucosyltransferase 1</fullName>
    </alternativeName>
</protein>
<proteinExistence type="evidence at transcript level"/>
<feature type="chain" id="PRO_0000204664" description="Sucrose synthase 1">
    <location>
        <begin position="1"/>
        <end position="805"/>
    </location>
</feature>
<feature type="region of interest" description="GT-B glycosyltransferase" evidence="1">
    <location>
        <begin position="274"/>
        <end position="751"/>
    </location>
</feature>
<dbReference type="EC" id="2.4.1.13"/>
<dbReference type="EMBL" id="X96938">
    <property type="protein sequence ID" value="CAA65639.1"/>
    <property type="molecule type" value="mRNA"/>
</dbReference>
<dbReference type="SMR" id="Q41608"/>
<dbReference type="GO" id="GO:0016157">
    <property type="term" value="F:sucrose synthase activity"/>
    <property type="evidence" value="ECO:0007669"/>
    <property type="project" value="UniProtKB-EC"/>
</dbReference>
<dbReference type="GO" id="GO:0005985">
    <property type="term" value="P:sucrose metabolic process"/>
    <property type="evidence" value="ECO:0007669"/>
    <property type="project" value="InterPro"/>
</dbReference>
<dbReference type="FunFam" id="1.20.120.1230:FF:000001">
    <property type="entry name" value="Sucrose synthase"/>
    <property type="match status" value="1"/>
</dbReference>
<dbReference type="FunFam" id="3.10.450.330:FF:000001">
    <property type="entry name" value="Sucrose synthase"/>
    <property type="match status" value="1"/>
</dbReference>
<dbReference type="FunFam" id="3.40.50.2000:FF:000004">
    <property type="entry name" value="Sucrose synthase"/>
    <property type="match status" value="1"/>
</dbReference>
<dbReference type="Gene3D" id="1.20.120.1230">
    <property type="match status" value="1"/>
</dbReference>
<dbReference type="Gene3D" id="3.10.450.330">
    <property type="match status" value="1"/>
</dbReference>
<dbReference type="Gene3D" id="3.40.50.2000">
    <property type="entry name" value="Glycogen Phosphorylase B"/>
    <property type="match status" value="2"/>
</dbReference>
<dbReference type="InterPro" id="IPR001296">
    <property type="entry name" value="Glyco_trans_1"/>
</dbReference>
<dbReference type="InterPro" id="IPR000368">
    <property type="entry name" value="Sucrose_synth_GT-B1"/>
</dbReference>
<dbReference type="InterPro" id="IPR012820">
    <property type="entry name" value="Sucrose_synthase_pln/cyn"/>
</dbReference>
<dbReference type="InterPro" id="IPR056736">
    <property type="entry name" value="SUS_EPBD"/>
</dbReference>
<dbReference type="InterPro" id="IPR056735">
    <property type="entry name" value="SUS_N"/>
</dbReference>
<dbReference type="NCBIfam" id="TIGR02470">
    <property type="entry name" value="sucr_synth"/>
    <property type="match status" value="1"/>
</dbReference>
<dbReference type="PANTHER" id="PTHR45839">
    <property type="match status" value="1"/>
</dbReference>
<dbReference type="PANTHER" id="PTHR45839:SF7">
    <property type="entry name" value="SUCROSE SYNTHASE 1"/>
    <property type="match status" value="1"/>
</dbReference>
<dbReference type="Pfam" id="PF00534">
    <property type="entry name" value="Glycos_transf_1"/>
    <property type="match status" value="1"/>
</dbReference>
<dbReference type="Pfam" id="PF00862">
    <property type="entry name" value="GT-B_Sucrose_synth"/>
    <property type="match status" value="1"/>
</dbReference>
<dbReference type="Pfam" id="PF24862">
    <property type="entry name" value="SUS_EPBD"/>
    <property type="match status" value="1"/>
</dbReference>
<dbReference type="Pfam" id="PF24861">
    <property type="entry name" value="SUS_N"/>
    <property type="match status" value="1"/>
</dbReference>
<dbReference type="SUPFAM" id="SSF53756">
    <property type="entry name" value="UDP-Glycosyltransferase/glycogen phosphorylase"/>
    <property type="match status" value="1"/>
</dbReference>
<comment type="function">
    <text>Sucrose-cleaving enzyme that provides UDP-glucose and fructose for various metabolic pathways.</text>
</comment>
<comment type="catalytic activity">
    <reaction>
        <text>an NDP-alpha-D-glucose + D-fructose = a ribonucleoside 5'-diphosphate + sucrose + H(+)</text>
        <dbReference type="Rhea" id="RHEA:16241"/>
        <dbReference type="ChEBI" id="CHEBI:15378"/>
        <dbReference type="ChEBI" id="CHEBI:17992"/>
        <dbReference type="ChEBI" id="CHEBI:37721"/>
        <dbReference type="ChEBI" id="CHEBI:57930"/>
        <dbReference type="ChEBI" id="CHEBI:76533"/>
        <dbReference type="EC" id="2.4.1.13"/>
    </reaction>
</comment>
<comment type="similarity">
    <text evidence="2">Belongs to the glycosyltransferase 1 family. Plant sucrose synthase subfamily.</text>
</comment>